<organism>
    <name type="scientific">Paraburkholderia xenovorans (strain LB400)</name>
    <dbReference type="NCBI Taxonomy" id="266265"/>
    <lineage>
        <taxon>Bacteria</taxon>
        <taxon>Pseudomonadati</taxon>
        <taxon>Pseudomonadota</taxon>
        <taxon>Betaproteobacteria</taxon>
        <taxon>Burkholderiales</taxon>
        <taxon>Burkholderiaceae</taxon>
        <taxon>Paraburkholderia</taxon>
    </lineage>
</organism>
<evidence type="ECO:0000255" key="1">
    <source>
        <dbReference type="HAMAP-Rule" id="MF_01376"/>
    </source>
</evidence>
<evidence type="ECO:0000305" key="2"/>
<proteinExistence type="inferred from homology"/>
<accession>Q13P97</accession>
<comment type="function">
    <text evidence="1">Involved in phosphonate degradation.</text>
</comment>
<comment type="catalytic activity">
    <reaction evidence="1">
        <text>(2-aminoethyl)phosphonate + pyruvate = phosphonoacetaldehyde + L-alanine</text>
        <dbReference type="Rhea" id="RHEA:17021"/>
        <dbReference type="ChEBI" id="CHEBI:15361"/>
        <dbReference type="ChEBI" id="CHEBI:57418"/>
        <dbReference type="ChEBI" id="CHEBI:57972"/>
        <dbReference type="ChEBI" id="CHEBI:58383"/>
        <dbReference type="EC" id="2.6.1.37"/>
    </reaction>
</comment>
<comment type="cofactor">
    <cofactor evidence="1">
        <name>pyridoxal 5'-phosphate</name>
        <dbReference type="ChEBI" id="CHEBI:597326"/>
    </cofactor>
</comment>
<comment type="subunit">
    <text evidence="1">Homodimer.</text>
</comment>
<comment type="similarity">
    <text evidence="1">Belongs to the class-V pyridoxal-phosphate-dependent aminotransferase family. PhnW subfamily.</text>
</comment>
<comment type="sequence caution" evidence="2">
    <conflict type="erroneous initiation">
        <sequence resource="EMBL-CDS" id="ABE34092"/>
    </conflict>
</comment>
<sequence length="370" mass="40036">MIPGNDPILLTPGPLTTSLRTREAMLRDWGSWDAAFNRMTHGVCADLLKIVHGENDYVCVPLQGSGTFAVEAALGTLVPRQGCVLVPNNGAYCARLIRILQRMGIAYIELVLREDEPVSAAAVEDAFNRHSRISHVAHVHLETSAGLLNPLDDIAAVCQRHGKSLIVDAMSSFGALPIDLRRGGIDALISASGKCLEGVPGMGFVIMRRSLLEDSEGRSPSLALDLHDQYVYMRKTTQWRFTPPTHVVAALREALDQFGAEGGQPARGARYARNCAALVGAMKALGFEPFLKPEVQAPVIVTFHAPRDPAWHFAAFYAAVREAGYVLYPGKLTQVETFRVGCIGAIDANELLNAAAAIGHALERLGIRVR</sequence>
<name>PHNW2_PARXL</name>
<reference key="1">
    <citation type="journal article" date="2006" name="Proc. Natl. Acad. Sci. U.S.A.">
        <title>Burkholderia xenovorans LB400 harbors a multi-replicon, 9.73-Mbp genome shaped for versatility.</title>
        <authorList>
            <person name="Chain P.S.G."/>
            <person name="Denef V.J."/>
            <person name="Konstantinidis K.T."/>
            <person name="Vergez L.M."/>
            <person name="Agullo L."/>
            <person name="Reyes V.L."/>
            <person name="Hauser L."/>
            <person name="Cordova M."/>
            <person name="Gomez L."/>
            <person name="Gonzalez M."/>
            <person name="Land M."/>
            <person name="Lao V."/>
            <person name="Larimer F."/>
            <person name="LiPuma J.J."/>
            <person name="Mahenthiralingam E."/>
            <person name="Malfatti S.A."/>
            <person name="Marx C.J."/>
            <person name="Parnell J.J."/>
            <person name="Ramette A."/>
            <person name="Richardson P."/>
            <person name="Seeger M."/>
            <person name="Smith D."/>
            <person name="Spilker T."/>
            <person name="Sul W.J."/>
            <person name="Tsoi T.V."/>
            <person name="Ulrich L.E."/>
            <person name="Zhulin I.B."/>
            <person name="Tiedje J.M."/>
        </authorList>
    </citation>
    <scope>NUCLEOTIDE SEQUENCE [LARGE SCALE GENOMIC DNA]</scope>
    <source>
        <strain>LB400</strain>
    </source>
</reference>
<feature type="chain" id="PRO_0000287222" description="2-aminoethylphosphonate--pyruvate transaminase 2">
    <location>
        <begin position="1"/>
        <end position="370"/>
    </location>
</feature>
<feature type="modified residue" description="N6-(pyridoxal phosphate)lysine" evidence="1">
    <location>
        <position position="194"/>
    </location>
</feature>
<keyword id="KW-0032">Aminotransferase</keyword>
<keyword id="KW-0663">Pyridoxal phosphate</keyword>
<keyword id="KW-0670">Pyruvate</keyword>
<keyword id="KW-1185">Reference proteome</keyword>
<keyword id="KW-0808">Transferase</keyword>
<dbReference type="EC" id="2.6.1.37" evidence="1"/>
<dbReference type="EMBL" id="CP000271">
    <property type="protein sequence ID" value="ABE34092.1"/>
    <property type="status" value="ALT_INIT"/>
    <property type="molecule type" value="Genomic_DNA"/>
</dbReference>
<dbReference type="SMR" id="Q13P97"/>
<dbReference type="STRING" id="266265.Bxe_B1876"/>
<dbReference type="KEGG" id="bxb:DR64_7186"/>
<dbReference type="KEGG" id="bxe:Bxe_B1876"/>
<dbReference type="eggNOG" id="COG0075">
    <property type="taxonomic scope" value="Bacteria"/>
</dbReference>
<dbReference type="Proteomes" id="UP000001817">
    <property type="component" value="Chromosome 2"/>
</dbReference>
<dbReference type="GO" id="GO:0047304">
    <property type="term" value="F:2-aminoethylphosphonate-pyruvate transaminase activity"/>
    <property type="evidence" value="ECO:0007669"/>
    <property type="project" value="UniProtKB-UniRule"/>
</dbReference>
<dbReference type="GO" id="GO:0019700">
    <property type="term" value="P:organic phosphonate catabolic process"/>
    <property type="evidence" value="ECO:0007669"/>
    <property type="project" value="InterPro"/>
</dbReference>
<dbReference type="Gene3D" id="3.90.1150.10">
    <property type="entry name" value="Aspartate Aminotransferase, domain 1"/>
    <property type="match status" value="1"/>
</dbReference>
<dbReference type="Gene3D" id="3.40.640.10">
    <property type="entry name" value="Type I PLP-dependent aspartate aminotransferase-like (Major domain)"/>
    <property type="match status" value="1"/>
</dbReference>
<dbReference type="HAMAP" id="MF_01376">
    <property type="entry name" value="PhnW_aminotrans_5"/>
    <property type="match status" value="1"/>
</dbReference>
<dbReference type="InterPro" id="IPR000192">
    <property type="entry name" value="Aminotrans_V_dom"/>
</dbReference>
<dbReference type="InterPro" id="IPR012703">
    <property type="entry name" value="NH2EtPonate_pyrv_transaminase"/>
</dbReference>
<dbReference type="InterPro" id="IPR015424">
    <property type="entry name" value="PyrdxlP-dep_Trfase"/>
</dbReference>
<dbReference type="InterPro" id="IPR015421">
    <property type="entry name" value="PyrdxlP-dep_Trfase_major"/>
</dbReference>
<dbReference type="InterPro" id="IPR015422">
    <property type="entry name" value="PyrdxlP-dep_Trfase_small"/>
</dbReference>
<dbReference type="InterPro" id="IPR024169">
    <property type="entry name" value="SP_NH2Trfase/AEP_transaminase"/>
</dbReference>
<dbReference type="NCBIfam" id="TIGR03301">
    <property type="entry name" value="PhnW-AepZ"/>
    <property type="match status" value="1"/>
</dbReference>
<dbReference type="NCBIfam" id="NF010006">
    <property type="entry name" value="PRK13479.1"/>
    <property type="match status" value="1"/>
</dbReference>
<dbReference type="NCBIfam" id="TIGR02326">
    <property type="entry name" value="transamin_PhnW"/>
    <property type="match status" value="1"/>
</dbReference>
<dbReference type="PANTHER" id="PTHR42778">
    <property type="entry name" value="2-AMINOETHYLPHOSPHONATE--PYRUVATE TRANSAMINASE"/>
    <property type="match status" value="1"/>
</dbReference>
<dbReference type="PANTHER" id="PTHR42778:SF1">
    <property type="entry name" value="2-AMINOETHYLPHOSPHONATE--PYRUVATE TRANSAMINASE"/>
    <property type="match status" value="1"/>
</dbReference>
<dbReference type="Pfam" id="PF00266">
    <property type="entry name" value="Aminotran_5"/>
    <property type="match status" value="1"/>
</dbReference>
<dbReference type="PIRSF" id="PIRSF000524">
    <property type="entry name" value="SPT"/>
    <property type="match status" value="1"/>
</dbReference>
<dbReference type="SUPFAM" id="SSF53383">
    <property type="entry name" value="PLP-dependent transferases"/>
    <property type="match status" value="1"/>
</dbReference>
<protein>
    <recommendedName>
        <fullName evidence="1">2-aminoethylphosphonate--pyruvate transaminase 2</fullName>
        <ecNumber evidence="1">2.6.1.37</ecNumber>
    </recommendedName>
    <alternativeName>
        <fullName evidence="1">2-aminoethylphosphonate aminotransferase 2</fullName>
    </alternativeName>
    <alternativeName>
        <fullName evidence="1">AEP transaminase 2</fullName>
        <shortName evidence="1">AEPT 2</shortName>
    </alternativeName>
</protein>
<gene>
    <name evidence="1" type="primary">phnW2</name>
    <name type="ordered locus">Bxeno_B1124</name>
    <name type="ORF">Bxe_B1876</name>
</gene>